<gene>
    <name evidence="1" type="primary">nadA</name>
    <name type="ordered locus">BPSL0912</name>
</gene>
<sequence>MQSAIKSVEYDRPLAAGAACGVGEAWAKVPDALAPDERDALKARIKALLVREKAVLVAHYYVDADLQALADETGGCVADSLEMARFGRDHDAHTLVVAGVRFMGETAKILSPGKRVLMPDLDATCSLDLGCPVDEFSQFCDAHPERTVVVYANTSAAVKARADWMVTSSIGLEIVADLHARGEKIIWAPDRHLGGYIQKKTGADMLMWQGSCLVHDEFKGIELDLLRHEYPDAKILVHPESPEGVVALADVVGSTTQLIDAAVKLDAQRFIVATDLGILHKMRLAAPGKTFIEAPTAGNSATCKSCAHCPWMAMNALSNLADVLERGHNEIFVEAAIAQRARMPIDRMLDFAARHKQRVQASGDLQRDQALFANVGAA</sequence>
<reference key="1">
    <citation type="journal article" date="2004" name="Proc. Natl. Acad. Sci. U.S.A.">
        <title>Genomic plasticity of the causative agent of melioidosis, Burkholderia pseudomallei.</title>
        <authorList>
            <person name="Holden M.T.G."/>
            <person name="Titball R.W."/>
            <person name="Peacock S.J."/>
            <person name="Cerdeno-Tarraga A.-M."/>
            <person name="Atkins T."/>
            <person name="Crossman L.C."/>
            <person name="Pitt T."/>
            <person name="Churcher C."/>
            <person name="Mungall K.L."/>
            <person name="Bentley S.D."/>
            <person name="Sebaihia M."/>
            <person name="Thomson N.R."/>
            <person name="Bason N."/>
            <person name="Beacham I.R."/>
            <person name="Brooks K."/>
            <person name="Brown K.A."/>
            <person name="Brown N.F."/>
            <person name="Challis G.L."/>
            <person name="Cherevach I."/>
            <person name="Chillingworth T."/>
            <person name="Cronin A."/>
            <person name="Crossett B."/>
            <person name="Davis P."/>
            <person name="DeShazer D."/>
            <person name="Feltwell T."/>
            <person name="Fraser A."/>
            <person name="Hance Z."/>
            <person name="Hauser H."/>
            <person name="Holroyd S."/>
            <person name="Jagels K."/>
            <person name="Keith K.E."/>
            <person name="Maddison M."/>
            <person name="Moule S."/>
            <person name="Price C."/>
            <person name="Quail M.A."/>
            <person name="Rabbinowitsch E."/>
            <person name="Rutherford K."/>
            <person name="Sanders M."/>
            <person name="Simmonds M."/>
            <person name="Songsivilai S."/>
            <person name="Stevens K."/>
            <person name="Tumapa S."/>
            <person name="Vesaratchavest M."/>
            <person name="Whitehead S."/>
            <person name="Yeats C."/>
            <person name="Barrell B.G."/>
            <person name="Oyston P.C.F."/>
            <person name="Parkhill J."/>
        </authorList>
    </citation>
    <scope>NUCLEOTIDE SEQUENCE [LARGE SCALE GENOMIC DNA]</scope>
    <source>
        <strain>K96243</strain>
    </source>
</reference>
<accession>Q63WH7</accession>
<keyword id="KW-0004">4Fe-4S</keyword>
<keyword id="KW-0963">Cytoplasm</keyword>
<keyword id="KW-0408">Iron</keyword>
<keyword id="KW-0411">Iron-sulfur</keyword>
<keyword id="KW-0479">Metal-binding</keyword>
<keyword id="KW-0662">Pyridine nucleotide biosynthesis</keyword>
<keyword id="KW-1185">Reference proteome</keyword>
<keyword id="KW-0808">Transferase</keyword>
<name>NADA_BURPS</name>
<comment type="function">
    <text evidence="1">Catalyzes the condensation of iminoaspartate with dihydroxyacetone phosphate to form quinolinate.</text>
</comment>
<comment type="catalytic activity">
    <reaction evidence="1">
        <text>iminosuccinate + dihydroxyacetone phosphate = quinolinate + phosphate + 2 H2O + H(+)</text>
        <dbReference type="Rhea" id="RHEA:25888"/>
        <dbReference type="ChEBI" id="CHEBI:15377"/>
        <dbReference type="ChEBI" id="CHEBI:15378"/>
        <dbReference type="ChEBI" id="CHEBI:29959"/>
        <dbReference type="ChEBI" id="CHEBI:43474"/>
        <dbReference type="ChEBI" id="CHEBI:57642"/>
        <dbReference type="ChEBI" id="CHEBI:77875"/>
        <dbReference type="EC" id="2.5.1.72"/>
    </reaction>
    <physiologicalReaction direction="left-to-right" evidence="1">
        <dbReference type="Rhea" id="RHEA:25889"/>
    </physiologicalReaction>
</comment>
<comment type="cofactor">
    <cofactor evidence="1">
        <name>[4Fe-4S] cluster</name>
        <dbReference type="ChEBI" id="CHEBI:49883"/>
    </cofactor>
    <text evidence="1">Binds 1 [4Fe-4S] cluster per subunit.</text>
</comment>
<comment type="pathway">
    <text evidence="1">Cofactor biosynthesis; NAD(+) biosynthesis; quinolinate from iminoaspartate: step 1/1.</text>
</comment>
<comment type="subcellular location">
    <subcellularLocation>
        <location evidence="1">Cytoplasm</location>
    </subcellularLocation>
</comment>
<comment type="similarity">
    <text evidence="1">Belongs to the quinolinate synthase family. Type 1 subfamily.</text>
</comment>
<organism>
    <name type="scientific">Burkholderia pseudomallei (strain K96243)</name>
    <dbReference type="NCBI Taxonomy" id="272560"/>
    <lineage>
        <taxon>Bacteria</taxon>
        <taxon>Pseudomonadati</taxon>
        <taxon>Pseudomonadota</taxon>
        <taxon>Betaproteobacteria</taxon>
        <taxon>Burkholderiales</taxon>
        <taxon>Burkholderiaceae</taxon>
        <taxon>Burkholderia</taxon>
        <taxon>pseudomallei group</taxon>
    </lineage>
</organism>
<dbReference type="EC" id="2.5.1.72" evidence="1"/>
<dbReference type="EMBL" id="BX571965">
    <property type="protein sequence ID" value="CAH34906.1"/>
    <property type="molecule type" value="Genomic_DNA"/>
</dbReference>
<dbReference type="RefSeq" id="WP_004185886.1">
    <property type="nucleotide sequence ID" value="NZ_CP009538.1"/>
</dbReference>
<dbReference type="RefSeq" id="YP_107539.1">
    <property type="nucleotide sequence ID" value="NC_006350.1"/>
</dbReference>
<dbReference type="SMR" id="Q63WH7"/>
<dbReference type="STRING" id="272560.BPSL0912"/>
<dbReference type="GeneID" id="93059425"/>
<dbReference type="KEGG" id="bps:BPSL0912"/>
<dbReference type="PATRIC" id="fig|272560.51.peg.670"/>
<dbReference type="eggNOG" id="COG0379">
    <property type="taxonomic scope" value="Bacteria"/>
</dbReference>
<dbReference type="UniPathway" id="UPA00253">
    <property type="reaction ID" value="UER00327"/>
</dbReference>
<dbReference type="Proteomes" id="UP000000605">
    <property type="component" value="Chromosome 1"/>
</dbReference>
<dbReference type="GO" id="GO:0005829">
    <property type="term" value="C:cytosol"/>
    <property type="evidence" value="ECO:0007669"/>
    <property type="project" value="TreeGrafter"/>
</dbReference>
<dbReference type="GO" id="GO:0051539">
    <property type="term" value="F:4 iron, 4 sulfur cluster binding"/>
    <property type="evidence" value="ECO:0007669"/>
    <property type="project" value="UniProtKB-KW"/>
</dbReference>
<dbReference type="GO" id="GO:0046872">
    <property type="term" value="F:metal ion binding"/>
    <property type="evidence" value="ECO:0007669"/>
    <property type="project" value="UniProtKB-KW"/>
</dbReference>
<dbReference type="GO" id="GO:0008987">
    <property type="term" value="F:quinolinate synthetase A activity"/>
    <property type="evidence" value="ECO:0007669"/>
    <property type="project" value="UniProtKB-UniRule"/>
</dbReference>
<dbReference type="GO" id="GO:0034628">
    <property type="term" value="P:'de novo' NAD biosynthetic process from L-aspartate"/>
    <property type="evidence" value="ECO:0007669"/>
    <property type="project" value="TreeGrafter"/>
</dbReference>
<dbReference type="FunFam" id="3.40.50.10800:FF:000001">
    <property type="entry name" value="Quinolinate synthase A"/>
    <property type="match status" value="1"/>
</dbReference>
<dbReference type="FunFam" id="3.40.50.10800:FF:000003">
    <property type="entry name" value="Quinolinate synthase A"/>
    <property type="match status" value="1"/>
</dbReference>
<dbReference type="Gene3D" id="3.40.50.10800">
    <property type="entry name" value="NadA-like"/>
    <property type="match status" value="3"/>
</dbReference>
<dbReference type="HAMAP" id="MF_00567">
    <property type="entry name" value="NadA_type1"/>
    <property type="match status" value="1"/>
</dbReference>
<dbReference type="InterPro" id="IPR003473">
    <property type="entry name" value="NadA"/>
</dbReference>
<dbReference type="InterPro" id="IPR036094">
    <property type="entry name" value="NadA_sf"/>
</dbReference>
<dbReference type="InterPro" id="IPR023513">
    <property type="entry name" value="Quinolinate_synth_A_type1"/>
</dbReference>
<dbReference type="NCBIfam" id="TIGR00550">
    <property type="entry name" value="nadA"/>
    <property type="match status" value="1"/>
</dbReference>
<dbReference type="NCBIfam" id="NF006877">
    <property type="entry name" value="PRK09375.1-1"/>
    <property type="match status" value="1"/>
</dbReference>
<dbReference type="NCBIfam" id="NF006878">
    <property type="entry name" value="PRK09375.1-2"/>
    <property type="match status" value="1"/>
</dbReference>
<dbReference type="PANTHER" id="PTHR30573:SF0">
    <property type="entry name" value="QUINOLINATE SYNTHASE, CHLOROPLASTIC"/>
    <property type="match status" value="1"/>
</dbReference>
<dbReference type="PANTHER" id="PTHR30573">
    <property type="entry name" value="QUINOLINATE SYNTHETASE A"/>
    <property type="match status" value="1"/>
</dbReference>
<dbReference type="Pfam" id="PF02445">
    <property type="entry name" value="NadA"/>
    <property type="match status" value="1"/>
</dbReference>
<dbReference type="SUPFAM" id="SSF142754">
    <property type="entry name" value="NadA-like"/>
    <property type="match status" value="1"/>
</dbReference>
<proteinExistence type="inferred from homology"/>
<feature type="chain" id="PRO_1000024950" description="Quinolinate synthase">
    <location>
        <begin position="1"/>
        <end position="378"/>
    </location>
</feature>
<feature type="binding site" evidence="1">
    <location>
        <position position="59"/>
    </location>
    <ligand>
        <name>iminosuccinate</name>
        <dbReference type="ChEBI" id="CHEBI:77875"/>
    </ligand>
</feature>
<feature type="binding site" evidence="1">
    <location>
        <position position="80"/>
    </location>
    <ligand>
        <name>iminosuccinate</name>
        <dbReference type="ChEBI" id="CHEBI:77875"/>
    </ligand>
</feature>
<feature type="binding site" evidence="1">
    <location>
        <position position="125"/>
    </location>
    <ligand>
        <name>[4Fe-4S] cluster</name>
        <dbReference type="ChEBI" id="CHEBI:49883"/>
    </ligand>
</feature>
<feature type="binding site" evidence="1">
    <location>
        <begin position="151"/>
        <end position="153"/>
    </location>
    <ligand>
        <name>iminosuccinate</name>
        <dbReference type="ChEBI" id="CHEBI:77875"/>
    </ligand>
</feature>
<feature type="binding site" evidence="1">
    <location>
        <position position="168"/>
    </location>
    <ligand>
        <name>iminosuccinate</name>
        <dbReference type="ChEBI" id="CHEBI:77875"/>
    </ligand>
</feature>
<feature type="binding site" evidence="1">
    <location>
        <position position="212"/>
    </location>
    <ligand>
        <name>[4Fe-4S] cluster</name>
        <dbReference type="ChEBI" id="CHEBI:49883"/>
    </ligand>
</feature>
<feature type="binding site" evidence="1">
    <location>
        <begin position="238"/>
        <end position="240"/>
    </location>
    <ligand>
        <name>iminosuccinate</name>
        <dbReference type="ChEBI" id="CHEBI:77875"/>
    </ligand>
</feature>
<feature type="binding site" evidence="1">
    <location>
        <position position="255"/>
    </location>
    <ligand>
        <name>iminosuccinate</name>
        <dbReference type="ChEBI" id="CHEBI:77875"/>
    </ligand>
</feature>
<feature type="binding site" evidence="1">
    <location>
        <position position="309"/>
    </location>
    <ligand>
        <name>[4Fe-4S] cluster</name>
        <dbReference type="ChEBI" id="CHEBI:49883"/>
    </ligand>
</feature>
<evidence type="ECO:0000255" key="1">
    <source>
        <dbReference type="HAMAP-Rule" id="MF_00567"/>
    </source>
</evidence>
<protein>
    <recommendedName>
        <fullName evidence="1">Quinolinate synthase</fullName>
        <ecNumber evidence="1">2.5.1.72</ecNumber>
    </recommendedName>
</protein>